<accession>Q9UI15</accession>
<accession>D3DN64</accession>
<accession>Q96A74</accession>
<protein>
    <recommendedName>
        <fullName>Transgelin-3</fullName>
    </recommendedName>
    <alternativeName>
        <fullName>Neuronal protein 22</fullName>
        <shortName>NP22</shortName>
    </alternativeName>
    <alternativeName>
        <fullName>Neuronal protein NP25</fullName>
    </alternativeName>
</protein>
<organism>
    <name type="scientific">Homo sapiens</name>
    <name type="common">Human</name>
    <dbReference type="NCBI Taxonomy" id="9606"/>
    <lineage>
        <taxon>Eukaryota</taxon>
        <taxon>Metazoa</taxon>
        <taxon>Chordata</taxon>
        <taxon>Craniata</taxon>
        <taxon>Vertebrata</taxon>
        <taxon>Euteleostomi</taxon>
        <taxon>Mammalia</taxon>
        <taxon>Eutheria</taxon>
        <taxon>Euarchontoglires</taxon>
        <taxon>Primates</taxon>
        <taxon>Haplorrhini</taxon>
        <taxon>Catarrhini</taxon>
        <taxon>Hominidae</taxon>
        <taxon>Homo</taxon>
    </lineage>
</organism>
<dbReference type="EMBL" id="AF303058">
    <property type="protein sequence ID" value="AAL09330.1"/>
    <property type="molecule type" value="mRNA"/>
</dbReference>
<dbReference type="EMBL" id="AF112201">
    <property type="protein sequence ID" value="AAF17189.1"/>
    <property type="status" value="ALT_FRAME"/>
    <property type="molecule type" value="mRNA"/>
</dbReference>
<dbReference type="EMBL" id="BT007408">
    <property type="protein sequence ID" value="AAP36076.1"/>
    <property type="molecule type" value="mRNA"/>
</dbReference>
<dbReference type="EMBL" id="CH471052">
    <property type="protein sequence ID" value="EAW79685.1"/>
    <property type="molecule type" value="Genomic_DNA"/>
</dbReference>
<dbReference type="EMBL" id="CH471052">
    <property type="protein sequence ID" value="EAW79686.1"/>
    <property type="molecule type" value="Genomic_DNA"/>
</dbReference>
<dbReference type="EMBL" id="BC015329">
    <property type="protein sequence ID" value="AAH15329.1"/>
    <property type="molecule type" value="mRNA"/>
</dbReference>
<dbReference type="CCDS" id="CCDS33816.1"/>
<dbReference type="RefSeq" id="NP_001008273.1">
    <property type="nucleotide sequence ID" value="NM_001008272.2"/>
</dbReference>
<dbReference type="RefSeq" id="NP_001008274.1">
    <property type="nucleotide sequence ID" value="NM_001008273.2"/>
</dbReference>
<dbReference type="RefSeq" id="NP_037391.2">
    <property type="nucleotide sequence ID" value="NM_013259.3"/>
</dbReference>
<dbReference type="SMR" id="Q9UI15"/>
<dbReference type="BioGRID" id="118880">
    <property type="interactions" value="40"/>
</dbReference>
<dbReference type="FunCoup" id="Q9UI15">
    <property type="interactions" value="24"/>
</dbReference>
<dbReference type="IntAct" id="Q9UI15">
    <property type="interactions" value="2"/>
</dbReference>
<dbReference type="STRING" id="9606.ENSP00000377494"/>
<dbReference type="iPTMnet" id="Q9UI15"/>
<dbReference type="PhosphoSitePlus" id="Q9UI15"/>
<dbReference type="SwissPalm" id="Q9UI15"/>
<dbReference type="BioMuta" id="TAGLN3"/>
<dbReference type="DMDM" id="33860182"/>
<dbReference type="jPOST" id="Q9UI15"/>
<dbReference type="MassIVE" id="Q9UI15"/>
<dbReference type="PaxDb" id="9606-ENSP00000377494"/>
<dbReference type="PeptideAtlas" id="Q9UI15"/>
<dbReference type="ProteomicsDB" id="84454"/>
<dbReference type="Pumba" id="Q9UI15"/>
<dbReference type="Antibodypedia" id="32456">
    <property type="antibodies" value="160 antibodies from 21 providers"/>
</dbReference>
<dbReference type="DNASU" id="29114"/>
<dbReference type="Ensembl" id="ENST00000273368.8">
    <property type="protein sequence ID" value="ENSP00000273368.4"/>
    <property type="gene ID" value="ENSG00000144834.14"/>
</dbReference>
<dbReference type="Ensembl" id="ENST00000393917.6">
    <property type="protein sequence ID" value="ENSP00000377494.2"/>
    <property type="gene ID" value="ENSG00000144834.14"/>
</dbReference>
<dbReference type="Ensembl" id="ENST00000455401.6">
    <property type="protein sequence ID" value="ENSP00000391160.2"/>
    <property type="gene ID" value="ENSG00000144834.14"/>
</dbReference>
<dbReference type="Ensembl" id="ENST00000478951.6">
    <property type="protein sequence ID" value="ENSP00000419105.1"/>
    <property type="gene ID" value="ENSG00000144834.14"/>
</dbReference>
<dbReference type="GeneID" id="29114"/>
<dbReference type="KEGG" id="hsa:29114"/>
<dbReference type="MANE-Select" id="ENST00000478951.6">
    <property type="protein sequence ID" value="ENSP00000419105.1"/>
    <property type="RefSeq nucleotide sequence ID" value="NM_001008272.2"/>
    <property type="RefSeq protein sequence ID" value="NP_001008273.1"/>
</dbReference>
<dbReference type="UCSC" id="uc003dyl.4">
    <property type="organism name" value="human"/>
</dbReference>
<dbReference type="AGR" id="HGNC:29868"/>
<dbReference type="CTD" id="29114"/>
<dbReference type="DisGeNET" id="29114"/>
<dbReference type="GeneCards" id="TAGLN3"/>
<dbReference type="HGNC" id="HGNC:29868">
    <property type="gene designation" value="TAGLN3"/>
</dbReference>
<dbReference type="HPA" id="ENSG00000144834">
    <property type="expression patterns" value="Tissue enriched (brain)"/>
</dbReference>
<dbReference type="MIM" id="607953">
    <property type="type" value="gene"/>
</dbReference>
<dbReference type="neXtProt" id="NX_Q9UI15"/>
<dbReference type="OpenTargets" id="ENSG00000144834"/>
<dbReference type="PharmGKB" id="PA134896732"/>
<dbReference type="VEuPathDB" id="HostDB:ENSG00000144834"/>
<dbReference type="eggNOG" id="KOG2046">
    <property type="taxonomic scope" value="Eukaryota"/>
</dbReference>
<dbReference type="GeneTree" id="ENSGT00940000159385"/>
<dbReference type="HOGENOM" id="CLU_055232_1_0_1"/>
<dbReference type="InParanoid" id="Q9UI15"/>
<dbReference type="OMA" id="KWLMDGI"/>
<dbReference type="OrthoDB" id="21595at2759"/>
<dbReference type="PAN-GO" id="Q9UI15">
    <property type="GO annotations" value="1 GO annotation based on evolutionary models"/>
</dbReference>
<dbReference type="PhylomeDB" id="Q9UI15"/>
<dbReference type="TreeFam" id="TF313921"/>
<dbReference type="PathwayCommons" id="Q9UI15"/>
<dbReference type="SignaLink" id="Q9UI15"/>
<dbReference type="BioGRID-ORCS" id="29114">
    <property type="hits" value="12 hits in 1144 CRISPR screens"/>
</dbReference>
<dbReference type="CD-CODE" id="DEE660B4">
    <property type="entry name" value="Stress granule"/>
</dbReference>
<dbReference type="CD-CODE" id="FB4E32DD">
    <property type="entry name" value="Presynaptic clusters and postsynaptic densities"/>
</dbReference>
<dbReference type="ChiTaRS" id="TAGLN3">
    <property type="organism name" value="human"/>
</dbReference>
<dbReference type="GeneWiki" id="TAGLN3"/>
<dbReference type="GenomeRNAi" id="29114"/>
<dbReference type="Pharos" id="Q9UI15">
    <property type="development level" value="Tbio"/>
</dbReference>
<dbReference type="PRO" id="PR:Q9UI15"/>
<dbReference type="Proteomes" id="UP000005640">
    <property type="component" value="Chromosome 3"/>
</dbReference>
<dbReference type="RNAct" id="Q9UI15">
    <property type="molecule type" value="protein"/>
</dbReference>
<dbReference type="Bgee" id="ENSG00000144834">
    <property type="expression patterns" value="Expressed in frontal pole and 141 other cell types or tissues"/>
</dbReference>
<dbReference type="ExpressionAtlas" id="Q9UI15">
    <property type="expression patterns" value="baseline and differential"/>
</dbReference>
<dbReference type="GO" id="GO:0015629">
    <property type="term" value="C:actin cytoskeleton"/>
    <property type="evidence" value="ECO:0000318"/>
    <property type="project" value="GO_Central"/>
</dbReference>
<dbReference type="GO" id="GO:0005634">
    <property type="term" value="C:nucleus"/>
    <property type="evidence" value="ECO:0007669"/>
    <property type="project" value="Ensembl"/>
</dbReference>
<dbReference type="GO" id="GO:0045202">
    <property type="term" value="C:synapse"/>
    <property type="evidence" value="ECO:0007669"/>
    <property type="project" value="Ensembl"/>
</dbReference>
<dbReference type="GO" id="GO:0051015">
    <property type="term" value="F:actin filament binding"/>
    <property type="evidence" value="ECO:0000318"/>
    <property type="project" value="GO_Central"/>
</dbReference>
<dbReference type="GO" id="GO:0007015">
    <property type="term" value="P:actin filament organization"/>
    <property type="evidence" value="ECO:0000318"/>
    <property type="project" value="GO_Central"/>
</dbReference>
<dbReference type="GO" id="GO:0007417">
    <property type="term" value="P:central nervous system development"/>
    <property type="evidence" value="ECO:0000304"/>
    <property type="project" value="ProtInc"/>
</dbReference>
<dbReference type="GO" id="GO:0000122">
    <property type="term" value="P:negative regulation of transcription by RNA polymerase II"/>
    <property type="evidence" value="ECO:0007669"/>
    <property type="project" value="Ensembl"/>
</dbReference>
<dbReference type="CDD" id="cd21281">
    <property type="entry name" value="CH_TAGLN3"/>
    <property type="match status" value="1"/>
</dbReference>
<dbReference type="FunFam" id="1.10.418.10:FF:000039">
    <property type="entry name" value="Transgelin"/>
    <property type="match status" value="1"/>
</dbReference>
<dbReference type="Gene3D" id="1.10.418.10">
    <property type="entry name" value="Calponin-like domain"/>
    <property type="match status" value="1"/>
</dbReference>
<dbReference type="InterPro" id="IPR050606">
    <property type="entry name" value="Calponin-like"/>
</dbReference>
<dbReference type="InterPro" id="IPR000557">
    <property type="entry name" value="Calponin_repeat"/>
</dbReference>
<dbReference type="InterPro" id="IPR001715">
    <property type="entry name" value="CH_dom"/>
</dbReference>
<dbReference type="InterPro" id="IPR036872">
    <property type="entry name" value="CH_dom_sf"/>
</dbReference>
<dbReference type="InterPro" id="IPR003096">
    <property type="entry name" value="SM22_calponin"/>
</dbReference>
<dbReference type="PANTHER" id="PTHR47385">
    <property type="entry name" value="CALPONIN"/>
    <property type="match status" value="1"/>
</dbReference>
<dbReference type="PANTHER" id="PTHR47385:SF10">
    <property type="entry name" value="TRANSGELIN-3"/>
    <property type="match status" value="1"/>
</dbReference>
<dbReference type="Pfam" id="PF00402">
    <property type="entry name" value="Calponin"/>
    <property type="match status" value="1"/>
</dbReference>
<dbReference type="Pfam" id="PF00307">
    <property type="entry name" value="CH"/>
    <property type="match status" value="1"/>
</dbReference>
<dbReference type="PRINTS" id="PR00888">
    <property type="entry name" value="SM22CALPONIN"/>
</dbReference>
<dbReference type="PRINTS" id="PR00890">
    <property type="entry name" value="TRANSGELIN"/>
</dbReference>
<dbReference type="SMART" id="SM00033">
    <property type="entry name" value="CH"/>
    <property type="match status" value="1"/>
</dbReference>
<dbReference type="SUPFAM" id="SSF47576">
    <property type="entry name" value="Calponin-homology domain, CH-domain"/>
    <property type="match status" value="1"/>
</dbReference>
<dbReference type="PROSITE" id="PS01052">
    <property type="entry name" value="CALPONIN_1"/>
    <property type="match status" value="1"/>
</dbReference>
<dbReference type="PROSITE" id="PS51122">
    <property type="entry name" value="CALPONIN_2"/>
    <property type="match status" value="1"/>
</dbReference>
<dbReference type="PROSITE" id="PS50021">
    <property type="entry name" value="CH"/>
    <property type="match status" value="1"/>
</dbReference>
<gene>
    <name type="primary">TAGLN3</name>
    <name type="synonym">NP25</name>
</gene>
<evidence type="ECO:0000250" key="1">
    <source>
        <dbReference type="UniProtKB" id="P37805"/>
    </source>
</evidence>
<evidence type="ECO:0000255" key="2">
    <source>
        <dbReference type="PROSITE-ProRule" id="PRU00044"/>
    </source>
</evidence>
<evidence type="ECO:0000256" key="3">
    <source>
        <dbReference type="SAM" id="MobiDB-lite"/>
    </source>
</evidence>
<evidence type="ECO:0000305" key="4"/>
<sequence>MANRGPSYGLSREVQEKIEQKYDADLENKLVDWIILQCAEDIEHPPPGRAHFQKWLMDGTVLCKLINSLYPPGQEPIPKISESKMAFKQMEQISQFLKAAETYGVRTTDIFQTVDLWEGKDMAAVQRTLMALGSVAVTKDDGCYRGEPSWFHRKAQQNRRGFSEEQLRQGQNVIGLQMGSNKGASQAGMTGYGMPRQIM</sequence>
<proteinExistence type="evidence at protein level"/>
<comment type="interaction">
    <interactant intactId="EBI-21901041">
        <id>Q9UI15</id>
    </interactant>
    <interactant intactId="EBI-1056740">
        <id>P37802</id>
        <label>TAGLN2</label>
    </interactant>
    <organismsDiffer>false</organismsDiffer>
    <experiments>3</experiments>
</comment>
<comment type="tissue specificity">
    <text>Widely expressed in the brain. Expression is increased in the superior frontal cortex of alcoholics, but not in the motor cortex or cerebellum.</text>
</comment>
<comment type="similarity">
    <text evidence="4">Belongs to the calponin family.</text>
</comment>
<comment type="sequence caution" evidence="4">
    <conflict type="frameshift">
        <sequence resource="EMBL-CDS" id="AAF17189"/>
    </conflict>
</comment>
<keyword id="KW-0903">Direct protein sequencing</keyword>
<keyword id="KW-0597">Phosphoprotein</keyword>
<keyword id="KW-1267">Proteomics identification</keyword>
<keyword id="KW-1185">Reference proteome</keyword>
<feature type="chain" id="PRO_0000204788" description="Transgelin-3">
    <location>
        <begin position="1"/>
        <end position="199"/>
    </location>
</feature>
<feature type="domain" description="Calponin-homology (CH)" evidence="2">
    <location>
        <begin position="24"/>
        <end position="136"/>
    </location>
</feature>
<feature type="repeat" description="Calponin-like">
    <location>
        <begin position="174"/>
        <end position="199"/>
    </location>
</feature>
<feature type="region of interest" description="Disordered" evidence="3">
    <location>
        <begin position="176"/>
        <end position="199"/>
    </location>
</feature>
<feature type="compositionally biased region" description="Polar residues" evidence="3">
    <location>
        <begin position="176"/>
        <end position="188"/>
    </location>
</feature>
<feature type="modified residue" description="Phosphoserine" evidence="1">
    <location>
        <position position="163"/>
    </location>
</feature>
<name>TAGL3_HUMAN</name>
<reference key="1">
    <citation type="journal article" date="2001" name="J. Neurochem.">
        <title>Molecular cloning and characterization of hNP22: a gene up-regulated in human alcoholic brain.</title>
        <authorList>
            <person name="Fan L."/>
            <person name="Jaquet V."/>
            <person name="Dodd P.R."/>
            <person name="Chen W."/>
            <person name="Wilce P.A."/>
        </authorList>
    </citation>
    <scope>NUCLEOTIDE SEQUENCE [MRNA]</scope>
    <source>
        <tissue>Brain</tissue>
    </source>
</reference>
<reference key="2">
    <citation type="journal article" date="2000" name="Proc. Natl. Acad. Sci. U.S.A.">
        <title>Gene expression profiling in the human hypothalamus-pituitary-adrenal axis and full-length cDNA cloning.</title>
        <authorList>
            <person name="Hu R.-M."/>
            <person name="Han Z.-G."/>
            <person name="Song H.-D."/>
            <person name="Peng Y.-D."/>
            <person name="Huang Q.-H."/>
            <person name="Ren S.-X."/>
            <person name="Gu Y.-J."/>
            <person name="Huang C.-H."/>
            <person name="Li Y.-B."/>
            <person name="Jiang C.-L."/>
            <person name="Fu G."/>
            <person name="Zhang Q.-H."/>
            <person name="Gu B.-W."/>
            <person name="Dai M."/>
            <person name="Mao Y.-F."/>
            <person name="Gao G.-F."/>
            <person name="Rong R."/>
            <person name="Ye M."/>
            <person name="Zhou J."/>
            <person name="Xu S.-H."/>
            <person name="Gu J."/>
            <person name="Shi J.-X."/>
            <person name="Jin W.-R."/>
            <person name="Zhang C.-K."/>
            <person name="Wu T.-M."/>
            <person name="Huang G.-Y."/>
            <person name="Chen Z."/>
            <person name="Chen M.-D."/>
            <person name="Chen J.-L."/>
        </authorList>
    </citation>
    <scope>NUCLEOTIDE SEQUENCE [LARGE SCALE MRNA]</scope>
    <source>
        <tissue>Hypothalamus</tissue>
    </source>
</reference>
<reference key="3">
    <citation type="submission" date="2003-05" db="EMBL/GenBank/DDBJ databases">
        <title>Cloning of human full-length CDSs in BD Creator(TM) system donor vector.</title>
        <authorList>
            <person name="Kalnine N."/>
            <person name="Chen X."/>
            <person name="Rolfs A."/>
            <person name="Halleck A."/>
            <person name="Hines L."/>
            <person name="Eisenstein S."/>
            <person name="Koundinya M."/>
            <person name="Raphael J."/>
            <person name="Moreira D."/>
            <person name="Kelley T."/>
            <person name="LaBaer J."/>
            <person name="Lin Y."/>
            <person name="Phelan M."/>
            <person name="Farmer A."/>
        </authorList>
    </citation>
    <scope>NUCLEOTIDE SEQUENCE [LARGE SCALE MRNA]</scope>
</reference>
<reference key="4">
    <citation type="submission" date="2005-09" db="EMBL/GenBank/DDBJ databases">
        <authorList>
            <person name="Mural R.J."/>
            <person name="Istrail S."/>
            <person name="Sutton G.G."/>
            <person name="Florea L."/>
            <person name="Halpern A.L."/>
            <person name="Mobarry C.M."/>
            <person name="Lippert R."/>
            <person name="Walenz B."/>
            <person name="Shatkay H."/>
            <person name="Dew I."/>
            <person name="Miller J.R."/>
            <person name="Flanigan M.J."/>
            <person name="Edwards N.J."/>
            <person name="Bolanos R."/>
            <person name="Fasulo D."/>
            <person name="Halldorsson B.V."/>
            <person name="Hannenhalli S."/>
            <person name="Turner R."/>
            <person name="Yooseph S."/>
            <person name="Lu F."/>
            <person name="Nusskern D.R."/>
            <person name="Shue B.C."/>
            <person name="Zheng X.H."/>
            <person name="Zhong F."/>
            <person name="Delcher A.L."/>
            <person name="Huson D.H."/>
            <person name="Kravitz S.A."/>
            <person name="Mouchard L."/>
            <person name="Reinert K."/>
            <person name="Remington K.A."/>
            <person name="Clark A.G."/>
            <person name="Waterman M.S."/>
            <person name="Eichler E.E."/>
            <person name="Adams M.D."/>
            <person name="Hunkapiller M.W."/>
            <person name="Myers E.W."/>
            <person name="Venter J.C."/>
        </authorList>
    </citation>
    <scope>NUCLEOTIDE SEQUENCE [LARGE SCALE GENOMIC DNA]</scope>
</reference>
<reference key="5">
    <citation type="journal article" date="2004" name="Genome Res.">
        <title>The status, quality, and expansion of the NIH full-length cDNA project: the Mammalian Gene Collection (MGC).</title>
        <authorList>
            <consortium name="The MGC Project Team"/>
        </authorList>
    </citation>
    <scope>NUCLEOTIDE SEQUENCE [LARGE SCALE MRNA]</scope>
    <source>
        <tissue>Brain</tissue>
    </source>
</reference>
<reference key="6">
    <citation type="submission" date="2008-12" db="UniProtKB">
        <authorList>
            <person name="Lubec G."/>
            <person name="Afjehi-Sadat L."/>
            <person name="Chen W.-Q."/>
            <person name="Sun Y."/>
        </authorList>
    </citation>
    <scope>PROTEIN SEQUENCE OF 5-12; 22-49; 55-79; 89-120; 128-139; 146-153 AND 160-196</scope>
    <scope>IDENTIFICATION BY MASS SPECTROMETRY</scope>
    <source>
        <tissue>Brain</tissue>
        <tissue>Cajal-Retzius cell</tissue>
        <tissue>Fetal brain cortex</tissue>
    </source>
</reference>